<sequence>MTIKRFFVCAGIMGCLSLNPAMAEWTGDARDGMFSGVVITQFHTGQIDNKPYFCIEGKQSAGSSISACSMKNSSVWGASFSTLYNQALYFYTTGQPVRIYYKPGVWTYPPFVKALTSNALVGLSTCTTSTECFGPDRKKNS</sequence>
<proteinExistence type="evidence at protein level"/>
<name>SUBB_ECOLX</name>
<comment type="function">
    <text evidence="2 4 5 6 7 8 9 14">Receptor-binding subunit of subtilase cytotoxin SubAB5. Required for receptor-binding and thus correct trafficking in the host cell (PubMed:17024087, PubMed:18042253). Has specificity for host glycans terminating in the sialic acid N-glycolyl-alpha-neuraminic acid (Neu5Gc); each subunit in the SubB pentamer binds one Neu5Gc (PubMed:18971931). The protease subunit (SubA) cleaves host BiP/HSPA5, inducing the host endoplasmic reticulum stress response and eventual cell death (PubMed:18005237, PubMed:18433465). Culture supernatant of E.coli expressing both subA and subB are toxic for Vero cells (African green monkey kidney cell line), Chinese hamster ovary cells and Hct-8 cells (human colonic epithelial cell line); the subunits are not toxic individually (PubMed:15226357). Purified SubAB5 is highly toxic, &lt;0.1 pg is able to kill at least 50% of 30'000 Vero cells in a microtiter plate assay after 3 days; no cytotoxicity is seen at 24 hours (PubMed:15226357). Preabsorption with cells expressing a ganglioside GM2 mimic reduced cytotoxicity of SubAB5 by 93% in the Vero cytotoxicity assay (PubMed:15226357). Intraperitoneal injection of 200 ng of purified SubAB5 kills mice; the higher the dose the faster the mice die. Animals injected with purified SubAB5 have microvascular thrombi in the brain and other organs, including the renal tubules and glomeruli. Mice fed E.coli cells expressing cloned SubAB5 experience drastic weight loss and appear ill and lethargic (PubMed:15226357). SubB alone at 2.5 ug/ml causes vacuolation of Vero cells, which requires the V-type ATPase proton pump; treated cells die (PubMed:17101670). Protein synthesis in Vero cells is transiently inhibited by SubAB5; both subunits are required for this effect (PubMed:17101670, PubMed:18005237, PubMed:18433465). Inhibition of protein synthesis is prevented by brefeldin A; cells are arrested in the G1 phase (PubMed:18005237). SubAB5 at 100 ng/ml induced caspase-dependent apoptosis in Vero cells through mitochondrial membrane damage (PubMed:19380466).</text>
</comment>
<comment type="subunit">
    <text evidence="8 10 13">Forms a complex with SubA with the stoichiometry SubA1:SubB5 (called SubAB5) (PubMed:15226357, PubMed:23921389). Each SubB subunit makes different contacts with the single SubA subunit (PubMed:23921389). This subunit alone forms pentamers (PubMed:18971931).</text>
</comment>
<comment type="subcellular location">
    <subcellularLocation>
        <location evidence="2">Secreted</location>
    </subcellularLocation>
    <subcellularLocation>
        <location evidence="2 4">Host cytoplasm</location>
        <location evidence="2 4">Host cytosol</location>
    </subcellularLocation>
    <subcellularLocation>
        <location evidence="14 15 16">Host endoplasmic reticulum lumen</location>
    </subcellularLocation>
    <text evidence="2 3 5 6">Colocalizes with host BiP/HSPA5 in the endoplasmic reticulum of Vero cells, its activity on BiP/HSPA5 is blocked by pretreatment with brefeldin A, which disrupts the Golgi apparatus and inhibits retrograde transport from the cell surface to the Golgi (PubMed:17024087, PubMed:18005237). Using different inhibitors it has been shown to be actively internalized by membrane-bound vesicles and undergoes clathrin-dependent retrograde transport, via early endosomes and the Golgi network, to the endoplasmic reticulum (PubMed:18042253). Trafficking is similar in Vero cells, human HeLa cells and murine N2A cells (PubMed:18042253).</text>
</comment>
<comment type="induction">
    <text evidence="2">Part of the subA-subB operon (PubMed:15226357).</text>
</comment>
<comment type="domain">
    <text evidence="10">A patch of hydrophobic and neutral of amino acids (residues 89-94) forms a ring around the central pore of the pentamer, which interacts with the A2 helix of the SubA subunit; some mutations in this patch prevent SubAB5 complex formation but still allow some targeting to the host endoplasmic reticulum lumen (PubMed:23921389). One residue in this patch, Thr-92, is the only residue that contacts SubA from all 5 of the SubB subunits (PubMed:23921389).</text>
</comment>
<comment type="disruption phenotype">
    <text evidence="2">No longer toxic to CHO cells when deletion construct is coexpressed with subA (PubMed:15226357).</text>
</comment>
<comment type="miscellaneous">
    <text evidence="11">The E.coli strain this operon was isolated from causes hemolytic uremic syndrome (HUS) and also encodes a Shigella-type toxin Stx.</text>
</comment>
<comment type="miscellaneous">
    <text evidence="12">Humans cannot convert CMP-Neu5Ac to CMP-Neu5Gc due to a mutation in the CMAHP gene, and so should be less susceptible to this toxin than other animals. However Neu5Gc can be acquired from red meat and milk products, resulting in Neu5Gc incorporation into human tissue (PubMed:18971931).</text>
</comment>
<dbReference type="EMBL" id="AF399919">
    <property type="protein sequence ID" value="AAT68784.1"/>
    <property type="molecule type" value="Genomic_DNA"/>
</dbReference>
<dbReference type="PDB" id="3DWA">
    <property type="method" value="X-ray"/>
    <property type="resolution" value="2.08 A"/>
    <property type="chains" value="A/B/C/D/E=24-141"/>
</dbReference>
<dbReference type="PDB" id="3DWP">
    <property type="method" value="X-ray"/>
    <property type="resolution" value="2.20 A"/>
    <property type="chains" value="A/B/C/D/E=24-141"/>
</dbReference>
<dbReference type="PDB" id="3DWQ">
    <property type="method" value="X-ray"/>
    <property type="resolution" value="2.10 A"/>
    <property type="chains" value="A/B/C/D/E=24-141"/>
</dbReference>
<dbReference type="PDB" id="4BWG">
    <property type="method" value="X-ray"/>
    <property type="resolution" value="2.60 A"/>
    <property type="chains" value="B/C/D/E/F/H/I/J/K/L=24-141"/>
</dbReference>
<dbReference type="PDBsum" id="3DWA"/>
<dbReference type="PDBsum" id="3DWP"/>
<dbReference type="PDBsum" id="3DWQ"/>
<dbReference type="PDBsum" id="4BWG"/>
<dbReference type="SMR" id="Q6EZC3"/>
<dbReference type="UniLectin" id="Q6EZC3"/>
<dbReference type="PHI-base" id="PHI:12221"/>
<dbReference type="GO" id="GO:0005576">
    <property type="term" value="C:extracellular region"/>
    <property type="evidence" value="ECO:0007669"/>
    <property type="project" value="UniProtKB-SubCell"/>
</dbReference>
<dbReference type="GO" id="GO:0044164">
    <property type="term" value="C:host cell cytosol"/>
    <property type="evidence" value="ECO:0007669"/>
    <property type="project" value="UniProtKB-SubCell"/>
</dbReference>
<dbReference type="GO" id="GO:0044166">
    <property type="term" value="C:host cell endoplasmic reticulum lumen"/>
    <property type="evidence" value="ECO:0000315"/>
    <property type="project" value="UniProtKB"/>
</dbReference>
<dbReference type="GO" id="GO:0033691">
    <property type="term" value="F:sialic acid binding"/>
    <property type="evidence" value="ECO:0000314"/>
    <property type="project" value="UniProtKB"/>
</dbReference>
<dbReference type="Gene3D" id="2.40.50.110">
    <property type="match status" value="1"/>
</dbReference>
<dbReference type="InterPro" id="IPR008992">
    <property type="entry name" value="Enterotoxin"/>
</dbReference>
<dbReference type="NCBIfam" id="NF038397">
    <property type="entry name" value="AB5_pltB_like"/>
    <property type="match status" value="1"/>
</dbReference>
<dbReference type="NCBIfam" id="NF011801">
    <property type="entry name" value="PRK15266.1"/>
    <property type="match status" value="1"/>
</dbReference>
<dbReference type="SUPFAM" id="SSF50203">
    <property type="entry name" value="Bacterial enterotoxins"/>
    <property type="match status" value="1"/>
</dbReference>
<reference evidence="17" key="1">
    <citation type="journal article" date="2001" name="Infect. Immun.">
        <title>Characterization of Saa, a novel autoagglutinating adhesin produced by locus of enterocyte effacement-negative Shiga-toxigenic Escherichia coli strains that are virulent for humans.</title>
        <authorList>
            <person name="Paton A.W."/>
            <person name="Srimanote P."/>
            <person name="Woodrow M.C."/>
            <person name="Paton J.C."/>
        </authorList>
    </citation>
    <scope>NUCLEOTIDE SEQUENCE [GENOMIC DNA]</scope>
    <source>
        <strain>O113:H21 / 98NK2 / STEC</strain>
        <plasmid>megaplasmid pO113</plasmid>
    </source>
</reference>
<reference key="2">
    <citation type="journal article" date="2007" name="Infect. Immun.">
        <title>Two distinct cytotoxic activities of subtilase cytotoxin produced by Shiga-toxigenic Escherichia coli.</title>
        <authorList>
            <person name="Morinaga N."/>
            <person name="Yahiro K."/>
            <person name="Matsuura G."/>
            <person name="Watanabe M."/>
            <person name="Nomura F."/>
            <person name="Moss J."/>
            <person name="Noda M."/>
        </authorList>
    </citation>
    <scope>NUCLEOTIDE SEQUENCE [GENOMIC DNA]</scope>
    <scope>FUNCTION</scope>
    <scope>SUBCELLULAR LOCATION</scope>
    <source>
        <strain>O29</strain>
    </source>
</reference>
<reference key="3">
    <citation type="journal article" date="2004" name="J. Exp. Med.">
        <title>A new family of potent AB(5) cytotoxins produced by Shiga toxigenic Escherichia coli.</title>
        <authorList>
            <person name="Paton A.W."/>
            <person name="Srimanote P."/>
            <person name="Talbot U.M."/>
            <person name="Wang H."/>
            <person name="Paton J.C."/>
        </authorList>
    </citation>
    <scope>PROTEIN SEQUENCE OF N-TERMINUS</scope>
    <scope>FUNCTION</scope>
    <scope>SUBUNIT</scope>
    <scope>SUBCELLULAR LOCATION</scope>
    <scope>OPERON</scope>
    <scope>DISRUPTION PHENOTYPE</scope>
    <source>
        <strain>O113:H21 / 98NK2 / STEC</strain>
        <plasmid>megaplasmid pO113</plasmid>
    </source>
</reference>
<reference key="4">
    <citation type="journal article" date="2004" name="J. Exp. Med.">
        <title>A new family of potent AB(5) cytotoxins produced by Shiga toxigenic Escherichia coli.</title>
        <authorList>
            <person name="Paton A.W."/>
            <person name="Srimanote P."/>
            <person name="Talbot U.M."/>
            <person name="Wang H."/>
            <person name="Paton J.C."/>
        </authorList>
    </citation>
    <scope>ERRATUM OF PUBMED:15226357</scope>
</reference>
<reference key="5">
    <citation type="journal article" date="2006" name="Nature">
        <title>AB5 subtilase cytotoxin inactivates the endoplasmic reticulum chaperone BiP.</title>
        <authorList>
            <person name="Paton A.W."/>
            <person name="Beddoe T."/>
            <person name="Thorpe C.M."/>
            <person name="Whisstock J.C."/>
            <person name="Wilce M.C."/>
            <person name="Rossjohn J."/>
            <person name="Talbot U.M."/>
            <person name="Paton J.C."/>
        </authorList>
    </citation>
    <scope>FUNCTION</scope>
    <scope>SUBCELLULAR LOCATION</scope>
</reference>
<reference key="6">
    <citation type="journal article" date="2008" name="Cell. Microbiol.">
        <title>Clathrin-dependent trafficking of subtilase cytotoxin, a novel AB5 toxin that targets the endoplasmic reticulum chaperone BiP.</title>
        <authorList>
            <person name="Chong D.C."/>
            <person name="Paton J.C."/>
            <person name="Thorpe C.M."/>
            <person name="Paton A.W."/>
        </authorList>
    </citation>
    <scope>FUNCTION</scope>
    <scope>SUBCELLULAR LOCATION</scope>
</reference>
<reference key="7">
    <citation type="journal article" date="2008" name="Cell. Microbiol.">
        <title>Subtilase cytotoxin, produced by Shiga-toxigenic Escherichia coli, transiently inhibits protein synthesis of Vero cells via degradation of BiP and induces cell cycle arrest at G1 by downregulation of cyclin D1.</title>
        <authorList>
            <person name="Morinaga N."/>
            <person name="Yahiro K."/>
            <person name="Matsuura G."/>
            <person name="Moss J."/>
            <person name="Noda M."/>
        </authorList>
    </citation>
    <scope>FUNCTION</scope>
    <scope>SUBCELLULAR LOCATION</scope>
</reference>
<reference key="8">
    <citation type="journal article" date="2008" name="Cell. Microbiol.">
        <title>Subtilase cytotoxin activates PERK, IRE1 and ATF6 endoplasmic reticulum stress-signalling pathways.</title>
        <authorList>
            <person name="Wolfson J.J."/>
            <person name="May K.L."/>
            <person name="Thorpe C.M."/>
            <person name="Jandhyala D.M."/>
            <person name="Paton J.C."/>
            <person name="Paton A.W."/>
        </authorList>
    </citation>
    <scope>FUNCTION</scope>
</reference>
<reference key="9">
    <citation type="journal article" date="2009" name="Infect. Immun.">
        <title>Novel subtilase cytotoxin produced by Shiga-toxigenic Escherichia coli induces apoptosis in Vero cells via mitochondrial membrane damage.</title>
        <authorList>
            <person name="Matsuura G."/>
            <person name="Morinaga N."/>
            <person name="Yahiro K."/>
            <person name="Komine R."/>
            <person name="Moss J."/>
            <person name="Yoshida H."/>
            <person name="Noda M."/>
        </authorList>
    </citation>
    <scope>FUNCTION</scope>
</reference>
<reference evidence="18 19 20" key="10">
    <citation type="journal article" date="2008" name="Nature">
        <title>Incorporation of a non-human glycan mediates human susceptibility to a bacterial toxin.</title>
        <authorList>
            <person name="Byres E."/>
            <person name="Paton A.W."/>
            <person name="Paton J.C."/>
            <person name="Lofling J.C."/>
            <person name="Smith D.F."/>
            <person name="Wilce M.C."/>
            <person name="Talbot U.M."/>
            <person name="Chong D.C."/>
            <person name="Yu H."/>
            <person name="Huang S."/>
            <person name="Chen X."/>
            <person name="Varki N.M."/>
            <person name="Varki A."/>
            <person name="Rossjohn J."/>
            <person name="Beddoe T."/>
        </authorList>
    </citation>
    <scope>X-RAY CRYSTALLOGRAPHY (2.08 ANGSTROMS) OF 24-141 IN COMPLEX WITH N-GLYCOLOYL-ALPHA-NEURAMINIC ACID</scope>
    <scope>SUBUNIT</scope>
    <scope>MUTAGENESIS OF SER-35; GLN-59 AND TYR-101</scope>
    <scope>GLYCAN-BINDING</scope>
</reference>
<reference evidence="21" key="11">
    <citation type="journal article" date="2013" name="J. Biol. Chem.">
        <title>Structural basis of subtilase cytotoxin SubAB assembly.</title>
        <authorList>
            <person name="Le Nours J."/>
            <person name="Paton A.W."/>
            <person name="Byres E."/>
            <person name="Troy S."/>
            <person name="Herdman B.P."/>
            <person name="Johnson M.D."/>
            <person name="Paton J.C."/>
            <person name="Rossjohn J."/>
            <person name="Beddoe T."/>
        </authorList>
    </citation>
    <scope>X-RAY CRYSTALLOGRAPHY (2.60 ANGSTROMS) OF 24-141 IN COMPLEX WITH SUBA</scope>
    <scope>SUBUNIT</scope>
    <scope>SUBCELLULAR LOCATION</scope>
    <scope>DOMAIN</scope>
    <scope>MUTAGENESIS OF VAL-38; TYR-89; TYR-91; THR-92; GLY-94 AND GLN-95</scope>
</reference>
<organism>
    <name type="scientific">Escherichia coli</name>
    <dbReference type="NCBI Taxonomy" id="562"/>
    <lineage>
        <taxon>Bacteria</taxon>
        <taxon>Pseudomonadati</taxon>
        <taxon>Pseudomonadota</taxon>
        <taxon>Gammaproteobacteria</taxon>
        <taxon>Enterobacterales</taxon>
        <taxon>Enterobacteriaceae</taxon>
        <taxon>Escherichia</taxon>
    </lineage>
</organism>
<keyword id="KW-0002">3D-structure</keyword>
<keyword id="KW-0903">Direct protein sequencing</keyword>
<keyword id="KW-1035">Host cytoplasm</keyword>
<keyword id="KW-1038">Host endoplasmic reticulum</keyword>
<keyword id="KW-0614">Plasmid</keyword>
<keyword id="KW-0964">Secreted</keyword>
<keyword id="KW-0732">Signal</keyword>
<keyword id="KW-0843">Virulence</keyword>
<accession>Q6EZC3</accession>
<feature type="signal peptide" evidence="1 13">
    <location>
        <begin position="1"/>
        <end position="23"/>
    </location>
</feature>
<feature type="chain" id="PRO_5004273050" description="Subtilase cytotoxin subunit B" evidence="1">
    <location>
        <begin position="24"/>
        <end position="141"/>
    </location>
</feature>
<feature type="region of interest" description="Hydrophobic patch important for binding to SubA" evidence="10">
    <location>
        <begin position="89"/>
        <end position="94"/>
    </location>
</feature>
<feature type="binding site" evidence="8">
    <location>
        <begin position="33"/>
        <end position="35"/>
    </location>
    <ligand>
        <name>N-glycoloyl-alpha-neuraminate</name>
        <dbReference type="ChEBI" id="CHEBI:176558"/>
    </ligand>
</feature>
<feature type="binding site" evidence="8">
    <location>
        <position position="59"/>
    </location>
    <ligand>
        <name>N-glycoloyl-alpha-neuraminate</name>
        <dbReference type="ChEBI" id="CHEBI:176558"/>
    </ligand>
</feature>
<feature type="binding site" evidence="8">
    <location>
        <position position="101"/>
    </location>
    <ligand>
        <name>N-glycoloyl-alpha-neuraminate</name>
        <dbReference type="ChEBI" id="CHEBI:176558"/>
    </ligand>
</feature>
<feature type="sequence variant" description="In strain: O29." evidence="4">
    <original>K</original>
    <variation>E</variation>
    <location>
        <position position="102"/>
    </location>
</feature>
<feature type="mutagenesis site" description="Reduced toxicity of SubAB5 for Vero cells over 99%, no longer binds to Vero cells, decreased binding to human colon sections." evidence="8">
    <original>S</original>
    <variation>A</variation>
    <location>
        <position position="35"/>
    </location>
</feature>
<feature type="mutagenesis site" description="50% toxicity of holotoxin on Vero cells, SubAB5 complex about 60% less stable." evidence="10">
    <original>V</original>
    <variation>A</variation>
    <location>
        <position position="38"/>
    </location>
</feature>
<feature type="mutagenesis site" description="Reduced toxicity of SubAB5 for Vero cells by 87%." evidence="8">
    <original>Q</original>
    <variation>A</variation>
    <location>
        <position position="59"/>
    </location>
</feature>
<feature type="mutagenesis site" description="Decreased localization to host endoplasmic reticulum lumen, nearly complete loss of toxicity of holotoxin on Vero cells, SubAB5 complex about 60% less stable." evidence="10">
    <original>Y</original>
    <variation>A</variation>
    <location>
        <position position="89"/>
    </location>
</feature>
<feature type="mutagenesis site" description="Holotoxin does not form." evidence="10">
    <original>Y</original>
    <variation>A</variation>
    <location>
        <position position="91"/>
    </location>
</feature>
<feature type="mutagenesis site" description="Poor localization to host endoplasmic reticulum lumen, nearly complete loss of toxicity of holotoxin on Vero cells, too little SubAB5 complex forms to test its stability." evidence="10">
    <original>T</original>
    <variation>D</variation>
    <location>
        <position position="92"/>
    </location>
</feature>
<feature type="mutagenesis site" description="No longer localizes to host endoplasmic reticulum lumen, about 5% toxicity of holotoxin on Vero cells, SubAB5 complex about 60% less stable." evidence="10">
    <original>T</original>
    <variation>A</variation>
    <location>
        <position position="93"/>
    </location>
</feature>
<feature type="mutagenesis site" description="Decreased localization to host endoplasmic reticulum lumen, loss of toxicity of holotoxin on Vero cells, SubAB5 complex about 50% less stable." evidence="10">
    <original>T</original>
    <variation>D</variation>
    <location>
        <position position="93"/>
    </location>
</feature>
<feature type="mutagenesis site" description="50% toxicity of holotoxin on Vero cells, too little SubAB5 complex forms to test its stability." evidence="10">
    <original>G</original>
    <variation>A</variation>
    <location>
        <position position="94"/>
    </location>
</feature>
<feature type="mutagenesis site" description="Holotoxin does not form." evidence="10">
    <original>G</original>
    <variation>D</variation>
    <location>
        <position position="94"/>
    </location>
</feature>
<feature type="mutagenesis site" description="About 25% toxicity of holotoxin on Vero cells, SubAB5 complex about 50% less stable." evidence="10">
    <original>Q</original>
    <variation>A</variation>
    <location>
        <position position="95"/>
    </location>
</feature>
<feature type="mutagenesis site" description="Reduced toxicity of SubAB5 for Vero cells by 97%, greatly reduced binding to Vero cells, decreased binding to human kidney sections." evidence="8">
    <original>Y</original>
    <variation>F</variation>
    <location>
        <position position="101"/>
    </location>
</feature>
<protein>
    <recommendedName>
        <fullName evidence="11">Subtilase cytotoxin subunit B</fullName>
    </recommendedName>
</protein>
<geneLocation type="plasmid" evidence="17">
    <name>megaplasmid pO113</name>
</geneLocation>
<gene>
    <name evidence="11" type="primary">subB</name>
</gene>
<evidence type="ECO:0000255" key="1"/>
<evidence type="ECO:0000269" key="2">
    <source>
    </source>
</evidence>
<evidence type="ECO:0000269" key="3">
    <source>
    </source>
</evidence>
<evidence type="ECO:0000269" key="4">
    <source>
    </source>
</evidence>
<evidence type="ECO:0000269" key="5">
    <source>
    </source>
</evidence>
<evidence type="ECO:0000269" key="6">
    <source>
    </source>
</evidence>
<evidence type="ECO:0000269" key="7">
    <source>
    </source>
</evidence>
<evidence type="ECO:0000269" key="8">
    <source>
    </source>
</evidence>
<evidence type="ECO:0000269" key="9">
    <source>
    </source>
</evidence>
<evidence type="ECO:0000269" key="10">
    <source>
    </source>
</evidence>
<evidence type="ECO:0000303" key="11">
    <source>
    </source>
</evidence>
<evidence type="ECO:0000303" key="12">
    <source>
    </source>
</evidence>
<evidence type="ECO:0000305" key="13">
    <source>
    </source>
</evidence>
<evidence type="ECO:0000305" key="14">
    <source>
    </source>
</evidence>
<evidence type="ECO:0000305" key="15">
    <source>
    </source>
</evidence>
<evidence type="ECO:0000305" key="16">
    <source>
    </source>
</evidence>
<evidence type="ECO:0000312" key="17">
    <source>
        <dbReference type="EMBL" id="AAT68784.1"/>
    </source>
</evidence>
<evidence type="ECO:0007744" key="18">
    <source>
        <dbReference type="PDB" id="3DWA"/>
    </source>
</evidence>
<evidence type="ECO:0007744" key="19">
    <source>
        <dbReference type="PDB" id="3DWP"/>
    </source>
</evidence>
<evidence type="ECO:0007744" key="20">
    <source>
        <dbReference type="PDB" id="3DWQ"/>
    </source>
</evidence>
<evidence type="ECO:0007744" key="21">
    <source>
        <dbReference type="PDB" id="4BWG"/>
    </source>
</evidence>